<feature type="chain" id="PRO_0000225728" description="Large ribosomal subunit protein bL32">
    <location>
        <begin position="1"/>
        <end position="70"/>
    </location>
</feature>
<feature type="region of interest" description="Disordered" evidence="2">
    <location>
        <begin position="1"/>
        <end position="21"/>
    </location>
</feature>
<feature type="compositionally biased region" description="Basic residues" evidence="2">
    <location>
        <begin position="1"/>
        <end position="19"/>
    </location>
</feature>
<evidence type="ECO:0000255" key="1">
    <source>
        <dbReference type="HAMAP-Rule" id="MF_00340"/>
    </source>
</evidence>
<evidence type="ECO:0000256" key="2">
    <source>
        <dbReference type="SAM" id="MobiDB-lite"/>
    </source>
</evidence>
<evidence type="ECO:0000305" key="3"/>
<dbReference type="EMBL" id="CP000009">
    <property type="protein sequence ID" value="AAW59911.1"/>
    <property type="molecule type" value="Genomic_DNA"/>
</dbReference>
<dbReference type="RefSeq" id="WP_011251715.1">
    <property type="nucleotide sequence ID" value="NZ_LT900338.1"/>
</dbReference>
<dbReference type="SMR" id="Q5FUN5"/>
<dbReference type="STRING" id="290633.GOX0117"/>
<dbReference type="GeneID" id="56904368"/>
<dbReference type="KEGG" id="gox:GOX0117"/>
<dbReference type="eggNOG" id="COG0333">
    <property type="taxonomic scope" value="Bacteria"/>
</dbReference>
<dbReference type="HOGENOM" id="CLU_129084_1_3_5"/>
<dbReference type="Proteomes" id="UP000006375">
    <property type="component" value="Chromosome"/>
</dbReference>
<dbReference type="GO" id="GO:0015934">
    <property type="term" value="C:large ribosomal subunit"/>
    <property type="evidence" value="ECO:0007669"/>
    <property type="project" value="InterPro"/>
</dbReference>
<dbReference type="GO" id="GO:0003735">
    <property type="term" value="F:structural constituent of ribosome"/>
    <property type="evidence" value="ECO:0007669"/>
    <property type="project" value="InterPro"/>
</dbReference>
<dbReference type="GO" id="GO:0006412">
    <property type="term" value="P:translation"/>
    <property type="evidence" value="ECO:0007669"/>
    <property type="project" value="UniProtKB-UniRule"/>
</dbReference>
<dbReference type="Gene3D" id="1.20.5.640">
    <property type="entry name" value="Single helix bin"/>
    <property type="match status" value="1"/>
</dbReference>
<dbReference type="HAMAP" id="MF_00340">
    <property type="entry name" value="Ribosomal_bL32"/>
    <property type="match status" value="1"/>
</dbReference>
<dbReference type="InterPro" id="IPR002677">
    <property type="entry name" value="Ribosomal_bL32"/>
</dbReference>
<dbReference type="InterPro" id="IPR044957">
    <property type="entry name" value="Ribosomal_bL32_bact"/>
</dbReference>
<dbReference type="InterPro" id="IPR011332">
    <property type="entry name" value="Ribosomal_zn-bd"/>
</dbReference>
<dbReference type="NCBIfam" id="TIGR01031">
    <property type="entry name" value="rpmF_bact"/>
    <property type="match status" value="1"/>
</dbReference>
<dbReference type="PANTHER" id="PTHR35534">
    <property type="entry name" value="50S RIBOSOMAL PROTEIN L32"/>
    <property type="match status" value="1"/>
</dbReference>
<dbReference type="PANTHER" id="PTHR35534:SF1">
    <property type="entry name" value="LARGE RIBOSOMAL SUBUNIT PROTEIN BL32"/>
    <property type="match status" value="1"/>
</dbReference>
<dbReference type="Pfam" id="PF01783">
    <property type="entry name" value="Ribosomal_L32p"/>
    <property type="match status" value="1"/>
</dbReference>
<dbReference type="SUPFAM" id="SSF57829">
    <property type="entry name" value="Zn-binding ribosomal proteins"/>
    <property type="match status" value="1"/>
</dbReference>
<comment type="similarity">
    <text evidence="1">Belongs to the bacterial ribosomal protein bL32 family.</text>
</comment>
<protein>
    <recommendedName>
        <fullName evidence="1">Large ribosomal subunit protein bL32</fullName>
    </recommendedName>
    <alternativeName>
        <fullName evidence="3">50S ribosomal protein L32</fullName>
    </alternativeName>
</protein>
<accession>Q5FUN5</accession>
<keyword id="KW-1185">Reference proteome</keyword>
<keyword id="KW-0687">Ribonucleoprotein</keyword>
<keyword id="KW-0689">Ribosomal protein</keyword>
<sequence length="70" mass="7565">MAVPKRKTTPSRRGMRRSHQALGVEAHAECSNCGEMKRPHHVCSHCGHYDGREVVAAGNSGKGLKTAVRA</sequence>
<proteinExistence type="inferred from homology"/>
<gene>
    <name evidence="1" type="primary">rpmF</name>
    <name type="ordered locus">GOX0117</name>
</gene>
<reference key="1">
    <citation type="journal article" date="2005" name="Nat. Biotechnol.">
        <title>Complete genome sequence of the acetic acid bacterium Gluconobacter oxydans.</title>
        <authorList>
            <person name="Prust C."/>
            <person name="Hoffmeister M."/>
            <person name="Liesegang H."/>
            <person name="Wiezer A."/>
            <person name="Fricke W.F."/>
            <person name="Ehrenreich A."/>
            <person name="Gottschalk G."/>
            <person name="Deppenmeier U."/>
        </authorList>
    </citation>
    <scope>NUCLEOTIDE SEQUENCE [LARGE SCALE GENOMIC DNA]</scope>
    <source>
        <strain>621H</strain>
    </source>
</reference>
<organism>
    <name type="scientific">Gluconobacter oxydans (strain 621H)</name>
    <name type="common">Gluconobacter suboxydans</name>
    <dbReference type="NCBI Taxonomy" id="290633"/>
    <lineage>
        <taxon>Bacteria</taxon>
        <taxon>Pseudomonadati</taxon>
        <taxon>Pseudomonadota</taxon>
        <taxon>Alphaproteobacteria</taxon>
        <taxon>Acetobacterales</taxon>
        <taxon>Acetobacteraceae</taxon>
        <taxon>Gluconobacter</taxon>
    </lineage>
</organism>
<name>RL32_GLUOX</name>